<accession>Q00580</accession>
<dbReference type="EMBL" id="L32176">
    <property type="protein sequence ID" value="AAA67706.1"/>
    <property type="molecule type" value="Genomic_DNA"/>
</dbReference>
<dbReference type="SMR" id="Q00580"/>
<dbReference type="OMA" id="QVIWADA"/>
<dbReference type="PHI-base" id="PHI:49"/>
<dbReference type="PHI-base" id="PHI:770"/>
<dbReference type="GO" id="GO:0005737">
    <property type="term" value="C:cytoplasm"/>
    <property type="evidence" value="ECO:0007669"/>
    <property type="project" value="TreeGrafter"/>
</dbReference>
<dbReference type="GO" id="GO:0005834">
    <property type="term" value="C:heterotrimeric G-protein complex"/>
    <property type="evidence" value="ECO:0007669"/>
    <property type="project" value="InterPro"/>
</dbReference>
<dbReference type="GO" id="GO:0001664">
    <property type="term" value="F:G protein-coupled receptor binding"/>
    <property type="evidence" value="ECO:0007669"/>
    <property type="project" value="InterPro"/>
</dbReference>
<dbReference type="GO" id="GO:0031683">
    <property type="term" value="F:G-protein beta/gamma-subunit complex binding"/>
    <property type="evidence" value="ECO:0007669"/>
    <property type="project" value="InterPro"/>
</dbReference>
<dbReference type="GO" id="GO:0005525">
    <property type="term" value="F:GTP binding"/>
    <property type="evidence" value="ECO:0007669"/>
    <property type="project" value="UniProtKB-KW"/>
</dbReference>
<dbReference type="GO" id="GO:0003924">
    <property type="term" value="F:GTPase activity"/>
    <property type="evidence" value="ECO:0007669"/>
    <property type="project" value="InterPro"/>
</dbReference>
<dbReference type="GO" id="GO:0046872">
    <property type="term" value="F:metal ion binding"/>
    <property type="evidence" value="ECO:0007669"/>
    <property type="project" value="UniProtKB-KW"/>
</dbReference>
<dbReference type="GO" id="GO:0007186">
    <property type="term" value="P:G protein-coupled receptor signaling pathway"/>
    <property type="evidence" value="ECO:0007669"/>
    <property type="project" value="InterPro"/>
</dbReference>
<dbReference type="GO" id="GO:0000750">
    <property type="term" value="P:pheromone-dependent signal transduction involved in conjugation with cellular fusion"/>
    <property type="evidence" value="ECO:0007669"/>
    <property type="project" value="TreeGrafter"/>
</dbReference>
<dbReference type="CDD" id="cd00066">
    <property type="entry name" value="G-alpha"/>
    <property type="match status" value="1"/>
</dbReference>
<dbReference type="FunFam" id="1.10.400.10:FF:000001">
    <property type="entry name" value="Guanine nucleotide-binding protein G(I) subunit alpha"/>
    <property type="match status" value="1"/>
</dbReference>
<dbReference type="FunFam" id="3.40.50.300:FF:000051">
    <property type="entry name" value="Guanine nucleotide-binding protein subunit alpha"/>
    <property type="match status" value="1"/>
</dbReference>
<dbReference type="FunFam" id="3.40.50.300:FF:000692">
    <property type="entry name" value="Guanine nucleotide-binding protein subunit alpha"/>
    <property type="match status" value="1"/>
</dbReference>
<dbReference type="Gene3D" id="1.10.400.10">
    <property type="entry name" value="GI Alpha 1, domain 2-like"/>
    <property type="match status" value="1"/>
</dbReference>
<dbReference type="Gene3D" id="3.40.50.300">
    <property type="entry name" value="P-loop containing nucleotide triphosphate hydrolases"/>
    <property type="match status" value="1"/>
</dbReference>
<dbReference type="InterPro" id="IPR002975">
    <property type="entry name" value="Fungi_Gprotein_alpha"/>
</dbReference>
<dbReference type="InterPro" id="IPR001019">
    <property type="entry name" value="Gprotein_alpha_su"/>
</dbReference>
<dbReference type="InterPro" id="IPR011025">
    <property type="entry name" value="GproteinA_insert"/>
</dbReference>
<dbReference type="InterPro" id="IPR027417">
    <property type="entry name" value="P-loop_NTPase"/>
</dbReference>
<dbReference type="PANTHER" id="PTHR10218">
    <property type="entry name" value="GTP-BINDING PROTEIN ALPHA SUBUNIT"/>
    <property type="match status" value="1"/>
</dbReference>
<dbReference type="PANTHER" id="PTHR10218:SF302">
    <property type="entry name" value="GUANINE NUCLEOTIDE-BINDING PROTEIN ALPHA-5 SUBUNIT"/>
    <property type="match status" value="1"/>
</dbReference>
<dbReference type="Pfam" id="PF00503">
    <property type="entry name" value="G-alpha"/>
    <property type="match status" value="1"/>
</dbReference>
<dbReference type="PRINTS" id="PR00318">
    <property type="entry name" value="GPROTEINA"/>
</dbReference>
<dbReference type="PRINTS" id="PR01241">
    <property type="entry name" value="GPROTEINAFNG"/>
</dbReference>
<dbReference type="SMART" id="SM00275">
    <property type="entry name" value="G_alpha"/>
    <property type="match status" value="1"/>
</dbReference>
<dbReference type="SUPFAM" id="SSF52540">
    <property type="entry name" value="P-loop containing nucleoside triphosphate hydrolases"/>
    <property type="match status" value="1"/>
</dbReference>
<dbReference type="SUPFAM" id="SSF47895">
    <property type="entry name" value="Transducin (alpha subunit), insertion domain"/>
    <property type="match status" value="1"/>
</dbReference>
<dbReference type="PROSITE" id="PS51882">
    <property type="entry name" value="G_ALPHA"/>
    <property type="match status" value="1"/>
</dbReference>
<organism>
    <name type="scientific">Cryphonectria parasitica</name>
    <name type="common">Chestnut blight fungus</name>
    <name type="synonym">Endothia parasitica</name>
    <dbReference type="NCBI Taxonomy" id="5116"/>
    <lineage>
        <taxon>Eukaryota</taxon>
        <taxon>Fungi</taxon>
        <taxon>Dikarya</taxon>
        <taxon>Ascomycota</taxon>
        <taxon>Pezizomycotina</taxon>
        <taxon>Sordariomycetes</taxon>
        <taxon>Sordariomycetidae</taxon>
        <taxon>Diaporthales</taxon>
        <taxon>Cryphonectriaceae</taxon>
        <taxon>Cryphonectria-Endothia species complex</taxon>
        <taxon>Cryphonectria</taxon>
    </lineage>
</organism>
<reference key="1">
    <citation type="journal article" date="1995" name="Proc. Natl. Acad. Sci. U.S.A.">
        <title>Virus-mediated or transgenic suppression of a G-protein alpha subunit and attenuation of fungal virulence.</title>
        <authorList>
            <person name="Choi G.H."/>
            <person name="Chen B."/>
            <person name="Nuss D.L."/>
        </authorList>
    </citation>
    <scope>NUCLEOTIDE SEQUENCE [GENOMIC DNA]</scope>
    <source>
        <strain>ATCC 38755 / EP155</strain>
    </source>
</reference>
<protein>
    <recommendedName>
        <fullName>Guanine nucleotide-binding protein subunit alpha</fullName>
    </recommendedName>
</protein>
<evidence type="ECO:0000250" key="1"/>
<evidence type="ECO:0000250" key="2">
    <source>
        <dbReference type="UniProtKB" id="P08539"/>
    </source>
</evidence>
<evidence type="ECO:0000250" key="3">
    <source>
        <dbReference type="UniProtKB" id="P18064"/>
    </source>
</evidence>
<evidence type="ECO:0000255" key="4">
    <source>
        <dbReference type="PROSITE-ProRule" id="PRU01230"/>
    </source>
</evidence>
<evidence type="ECO:0000256" key="5">
    <source>
        <dbReference type="SAM" id="MobiDB-lite"/>
    </source>
</evidence>
<evidence type="ECO:0000305" key="6"/>
<comment type="function">
    <text>Guanine nucleotide-binding proteins (G proteins) are involved as modulators or transducers in various transmembrane signaling systems.</text>
</comment>
<comment type="cofactor">
    <cofactor evidence="3">
        <name>Mg(2+)</name>
        <dbReference type="ChEBI" id="CHEBI:18420"/>
    </cofactor>
</comment>
<comment type="subunit">
    <text>G proteins are composed of 3 units; alpha, beta and gamma. The alpha chain contains the guanine nucleotide binding site.</text>
</comment>
<comment type="similarity">
    <text evidence="6">Belongs to the G-alpha family. G(q) subfamily.</text>
</comment>
<keyword id="KW-0342">GTP-binding</keyword>
<keyword id="KW-0378">Hydrolase</keyword>
<keyword id="KW-0449">Lipoprotein</keyword>
<keyword id="KW-0460">Magnesium</keyword>
<keyword id="KW-0479">Metal-binding</keyword>
<keyword id="KW-0519">Myristate</keyword>
<keyword id="KW-0547">Nucleotide-binding</keyword>
<keyword id="KW-0564">Palmitate</keyword>
<keyword id="KW-0807">Transducer</keyword>
<feature type="initiator methionine" description="Removed" evidence="1">
    <location>
        <position position="1"/>
    </location>
</feature>
<feature type="chain" id="PRO_0000203600" description="Guanine nucleotide-binding protein subunit alpha">
    <location>
        <begin position="2"/>
        <end position="353"/>
    </location>
</feature>
<feature type="domain" description="G-alpha" evidence="4">
    <location>
        <begin position="32"/>
        <end position="353"/>
    </location>
</feature>
<feature type="region of interest" description="Disordered" evidence="5">
    <location>
        <begin position="1"/>
        <end position="26"/>
    </location>
</feature>
<feature type="region of interest" description="G1 motif" evidence="4">
    <location>
        <begin position="35"/>
        <end position="48"/>
    </location>
</feature>
<feature type="region of interest" description="G2 motif" evidence="4">
    <location>
        <begin position="173"/>
        <end position="181"/>
    </location>
</feature>
<feature type="region of interest" description="G3 motif" evidence="4">
    <location>
        <begin position="196"/>
        <end position="205"/>
    </location>
</feature>
<feature type="region of interest" description="G4 motif" evidence="4">
    <location>
        <begin position="265"/>
        <end position="272"/>
    </location>
</feature>
<feature type="region of interest" description="G5 motif" evidence="4">
    <location>
        <begin position="323"/>
        <end position="328"/>
    </location>
</feature>
<feature type="compositionally biased region" description="Basic and acidic residues" evidence="5">
    <location>
        <begin position="7"/>
        <end position="26"/>
    </location>
</feature>
<feature type="binding site" evidence="3">
    <location>
        <position position="43"/>
    </location>
    <ligand>
        <name>GTP</name>
        <dbReference type="ChEBI" id="CHEBI:37565"/>
    </ligand>
</feature>
<feature type="binding site" evidence="3">
    <location>
        <position position="44"/>
    </location>
    <ligand>
        <name>GTP</name>
        <dbReference type="ChEBI" id="CHEBI:37565"/>
    </ligand>
</feature>
<feature type="binding site" evidence="3">
    <location>
        <position position="45"/>
    </location>
    <ligand>
        <name>GTP</name>
        <dbReference type="ChEBI" id="CHEBI:37565"/>
    </ligand>
</feature>
<feature type="binding site" evidence="3">
    <location>
        <position position="46"/>
    </location>
    <ligand>
        <name>GTP</name>
        <dbReference type="ChEBI" id="CHEBI:37565"/>
    </ligand>
</feature>
<feature type="binding site" evidence="3">
    <location>
        <position position="47"/>
    </location>
    <ligand>
        <name>GTP</name>
        <dbReference type="ChEBI" id="CHEBI:37565"/>
    </ligand>
</feature>
<feature type="binding site" evidence="3">
    <location>
        <position position="47"/>
    </location>
    <ligand>
        <name>Mg(2+)</name>
        <dbReference type="ChEBI" id="CHEBI:18420"/>
    </ligand>
</feature>
<feature type="binding site" evidence="3">
    <location>
        <position position="48"/>
    </location>
    <ligand>
        <name>GTP</name>
        <dbReference type="ChEBI" id="CHEBI:37565"/>
    </ligand>
</feature>
<feature type="binding site" evidence="3">
    <location>
        <position position="150"/>
    </location>
    <ligand>
        <name>GTP</name>
        <dbReference type="ChEBI" id="CHEBI:37565"/>
    </ligand>
</feature>
<feature type="binding site" evidence="3">
    <location>
        <position position="175"/>
    </location>
    <ligand>
        <name>GTP</name>
        <dbReference type="ChEBI" id="CHEBI:37565"/>
    </ligand>
</feature>
<feature type="binding site" evidence="3">
    <location>
        <position position="181"/>
    </location>
    <ligand>
        <name>GTP</name>
        <dbReference type="ChEBI" id="CHEBI:37565"/>
    </ligand>
</feature>
<feature type="binding site" evidence="3">
    <location>
        <position position="181"/>
    </location>
    <ligand>
        <name>Mg(2+)</name>
        <dbReference type="ChEBI" id="CHEBI:18420"/>
    </ligand>
</feature>
<feature type="binding site" evidence="3">
    <location>
        <position position="203"/>
    </location>
    <ligand>
        <name>GTP</name>
        <dbReference type="ChEBI" id="CHEBI:37565"/>
    </ligand>
</feature>
<feature type="binding site" evidence="3">
    <location>
        <position position="269"/>
    </location>
    <ligand>
        <name>GTP</name>
        <dbReference type="ChEBI" id="CHEBI:37565"/>
    </ligand>
</feature>
<feature type="binding site" evidence="3">
    <location>
        <position position="270"/>
    </location>
    <ligand>
        <name>GTP</name>
        <dbReference type="ChEBI" id="CHEBI:37565"/>
    </ligand>
</feature>
<feature type="binding site" evidence="3">
    <location>
        <position position="272"/>
    </location>
    <ligand>
        <name>GTP</name>
        <dbReference type="ChEBI" id="CHEBI:37565"/>
    </ligand>
</feature>
<feature type="binding site" evidence="3">
    <location>
        <position position="325"/>
    </location>
    <ligand>
        <name>GTP</name>
        <dbReference type="ChEBI" id="CHEBI:37565"/>
    </ligand>
</feature>
<feature type="lipid moiety-binding region" description="N-myristoyl glycine" evidence="2">
    <location>
        <position position="2"/>
    </location>
</feature>
<feature type="lipid moiety-binding region" description="S-palmitoyl cysteine" evidence="2">
    <location>
        <position position="3"/>
    </location>
</feature>
<proteinExistence type="inferred from homology"/>
<sequence length="353" mass="41049">MGCGMSTEEKEGKARNEEIENQLKRDRMQQRNEIKMLLLGAGESGKSTILKQMKLIHEGGYSRDERESFKEIIFSNTVQSMRVILEAMESLELPLEDQRMEYHVQTIFMQPAQIEGDVLPPEVGSAIEALWKDRGVQECFKRSREYQLNDSARYYFDNIARIAAPDYMPNDQDVLRSRVKTTGITETTFIIGDLTYRMFDVGGQRSERKKWIHCFENVTTILFLVAISEYDQLLFEDETVNRMQEALTLFDSICNSRWFIKTSIILFLNKIDRFKEKLPVSPMKNYFPDYEGGDDYAAACDYILNRFVSLNQHETKQIYTHFTCATDTTQIRFVMAAVNDIIIQENLRLCGLI</sequence>
<name>GPA1_CRYPA</name>